<protein>
    <recommendedName>
        <fullName evidence="1">N-acetyl-gamma-glutamyl-phosphate reductase</fullName>
        <shortName evidence="1">AGPR</shortName>
        <ecNumber evidence="1">1.2.1.38</ecNumber>
    </recommendedName>
    <alternativeName>
        <fullName evidence="1">N-acetyl-glutamate semialdehyde dehydrogenase</fullName>
        <shortName evidence="1">NAGSA dehydrogenase</shortName>
    </alternativeName>
</protein>
<reference key="1">
    <citation type="journal article" date="2002" name="Nucleic Acids Res.">
        <title>Genome sequence of Shigella flexneri 2a: insights into pathogenicity through comparison with genomes of Escherichia coli K12 and O157.</title>
        <authorList>
            <person name="Jin Q."/>
            <person name="Yuan Z."/>
            <person name="Xu J."/>
            <person name="Wang Y."/>
            <person name="Shen Y."/>
            <person name="Lu W."/>
            <person name="Wang J."/>
            <person name="Liu H."/>
            <person name="Yang J."/>
            <person name="Yang F."/>
            <person name="Zhang X."/>
            <person name="Zhang J."/>
            <person name="Yang G."/>
            <person name="Wu H."/>
            <person name="Qu D."/>
            <person name="Dong J."/>
            <person name="Sun L."/>
            <person name="Xue Y."/>
            <person name="Zhao A."/>
            <person name="Gao Y."/>
            <person name="Zhu J."/>
            <person name="Kan B."/>
            <person name="Ding K."/>
            <person name="Chen S."/>
            <person name="Cheng H."/>
            <person name="Yao Z."/>
            <person name="He B."/>
            <person name="Chen R."/>
            <person name="Ma D."/>
            <person name="Qiang B."/>
            <person name="Wen Y."/>
            <person name="Hou Y."/>
            <person name="Yu J."/>
        </authorList>
    </citation>
    <scope>NUCLEOTIDE SEQUENCE [LARGE SCALE GENOMIC DNA]</scope>
    <source>
        <strain>301 / Serotype 2a</strain>
    </source>
</reference>
<reference key="2">
    <citation type="journal article" date="2003" name="Infect. Immun.">
        <title>Complete genome sequence and comparative genomics of Shigella flexneri serotype 2a strain 2457T.</title>
        <authorList>
            <person name="Wei J."/>
            <person name="Goldberg M.B."/>
            <person name="Burland V."/>
            <person name="Venkatesan M.M."/>
            <person name="Deng W."/>
            <person name="Fournier G."/>
            <person name="Mayhew G.F."/>
            <person name="Plunkett G. III"/>
            <person name="Rose D.J."/>
            <person name="Darling A."/>
            <person name="Mau B."/>
            <person name="Perna N.T."/>
            <person name="Payne S.M."/>
            <person name="Runyen-Janecky L.J."/>
            <person name="Zhou S."/>
            <person name="Schwartz D.C."/>
            <person name="Blattner F.R."/>
        </authorList>
    </citation>
    <scope>NUCLEOTIDE SEQUENCE [LARGE SCALE GENOMIC DNA]</scope>
    <source>
        <strain>ATCC 700930 / 2457T / Serotype 2a</strain>
    </source>
</reference>
<comment type="function">
    <text evidence="1">Catalyzes the NADPH-dependent reduction of N-acetyl-5-glutamyl phosphate to yield N-acetyl-L-glutamate 5-semialdehyde.</text>
</comment>
<comment type="catalytic activity">
    <reaction evidence="1">
        <text>N-acetyl-L-glutamate 5-semialdehyde + phosphate + NADP(+) = N-acetyl-L-glutamyl 5-phosphate + NADPH + H(+)</text>
        <dbReference type="Rhea" id="RHEA:21588"/>
        <dbReference type="ChEBI" id="CHEBI:15378"/>
        <dbReference type="ChEBI" id="CHEBI:29123"/>
        <dbReference type="ChEBI" id="CHEBI:43474"/>
        <dbReference type="ChEBI" id="CHEBI:57783"/>
        <dbReference type="ChEBI" id="CHEBI:57936"/>
        <dbReference type="ChEBI" id="CHEBI:58349"/>
        <dbReference type="EC" id="1.2.1.38"/>
    </reaction>
</comment>
<comment type="pathway">
    <text evidence="1">Amino-acid biosynthesis; L-arginine biosynthesis; N(2)-acetyl-L-ornithine from L-glutamate: step 3/4.</text>
</comment>
<comment type="subcellular location">
    <subcellularLocation>
        <location evidence="1">Cytoplasm</location>
    </subcellularLocation>
</comment>
<comment type="similarity">
    <text evidence="1">Belongs to the NAGSA dehydrogenase family. Type 1 subfamily.</text>
</comment>
<accession>P59310</accession>
<gene>
    <name evidence="1" type="primary">argC</name>
    <name type="ordered locus">SF4035</name>
    <name type="ordered locus">S3711</name>
</gene>
<proteinExistence type="evidence at protein level"/>
<feature type="chain" id="PRO_0000112446" description="N-acetyl-gamma-glutamyl-phosphate reductase">
    <location>
        <begin position="1"/>
        <end position="334"/>
    </location>
</feature>
<feature type="active site" evidence="1">
    <location>
        <position position="154"/>
    </location>
</feature>
<feature type="strand" evidence="2">
    <location>
        <begin position="2"/>
        <end position="7"/>
    </location>
</feature>
<feature type="turn" evidence="2">
    <location>
        <begin position="8"/>
        <end position="10"/>
    </location>
</feature>
<feature type="helix" evidence="2">
    <location>
        <begin position="12"/>
        <end position="23"/>
    </location>
</feature>
<feature type="strand" evidence="2">
    <location>
        <begin position="27"/>
        <end position="35"/>
    </location>
</feature>
<feature type="turn" evidence="2">
    <location>
        <begin position="39"/>
        <end position="42"/>
    </location>
</feature>
<feature type="helix" evidence="2">
    <location>
        <begin position="45"/>
        <end position="48"/>
    </location>
</feature>
<feature type="helix" evidence="2">
    <location>
        <begin position="50"/>
        <end position="52"/>
    </location>
</feature>
<feature type="turn" evidence="2">
    <location>
        <begin position="53"/>
        <end position="55"/>
    </location>
</feature>
<feature type="strand" evidence="2">
    <location>
        <begin position="59"/>
        <end position="65"/>
    </location>
</feature>
<feature type="helix" evidence="2">
    <location>
        <begin position="66"/>
        <end position="68"/>
    </location>
</feature>
<feature type="strand" evidence="2">
    <location>
        <begin position="74"/>
        <end position="78"/>
    </location>
</feature>
<feature type="helix" evidence="2">
    <location>
        <begin position="82"/>
        <end position="94"/>
    </location>
</feature>
<feature type="strand" evidence="2">
    <location>
        <begin position="98"/>
        <end position="101"/>
    </location>
</feature>
<feature type="strand" evidence="2">
    <location>
        <begin position="107"/>
        <end position="109"/>
    </location>
</feature>
<feature type="helix" evidence="2">
    <location>
        <begin position="111"/>
        <end position="117"/>
    </location>
</feature>
<feature type="strand" evidence="2">
    <location>
        <begin position="118"/>
        <end position="120"/>
    </location>
</feature>
<feature type="helix" evidence="2">
    <location>
        <begin position="125"/>
        <end position="130"/>
    </location>
</feature>
<feature type="turn" evidence="2">
    <location>
        <begin position="136"/>
        <end position="138"/>
    </location>
</feature>
<feature type="helix" evidence="2">
    <location>
        <begin position="141"/>
        <end position="144"/>
    </location>
</feature>
<feature type="strand" evidence="2">
    <location>
        <begin position="147"/>
        <end position="150"/>
    </location>
</feature>
<feature type="helix" evidence="2">
    <location>
        <begin position="154"/>
        <end position="168"/>
    </location>
</feature>
<feature type="strand" evidence="2">
    <location>
        <begin position="179"/>
        <end position="184"/>
    </location>
</feature>
<feature type="helix" evidence="2">
    <location>
        <begin position="186"/>
        <end position="189"/>
    </location>
</feature>
<feature type="helix" evidence="2">
    <location>
        <begin position="199"/>
        <end position="201"/>
    </location>
</feature>
<feature type="strand" evidence="2">
    <location>
        <begin position="203"/>
        <end position="206"/>
    </location>
</feature>
<feature type="turn" evidence="2">
    <location>
        <begin position="209"/>
        <end position="211"/>
    </location>
</feature>
<feature type="helix" evidence="2">
    <location>
        <begin position="214"/>
        <end position="222"/>
    </location>
</feature>
<feature type="strand" evidence="2">
    <location>
        <begin position="227"/>
        <end position="237"/>
    </location>
</feature>
<feature type="strand" evidence="2">
    <location>
        <begin position="239"/>
        <end position="247"/>
    </location>
</feature>
<feature type="helix" evidence="2">
    <location>
        <begin position="253"/>
        <end position="264"/>
    </location>
</feature>
<feature type="strand" evidence="2">
    <location>
        <begin position="270"/>
        <end position="272"/>
    </location>
</feature>
<feature type="strand" evidence="2">
    <location>
        <begin position="274"/>
        <end position="276"/>
    </location>
</feature>
<feature type="helix" evidence="2">
    <location>
        <begin position="280"/>
        <end position="282"/>
    </location>
</feature>
<feature type="turn" evidence="2">
    <location>
        <begin position="283"/>
        <end position="285"/>
    </location>
</feature>
<feature type="strand" evidence="2">
    <location>
        <begin position="289"/>
        <end position="296"/>
    </location>
</feature>
<feature type="strand" evidence="2">
    <location>
        <begin position="299"/>
        <end position="306"/>
    </location>
</feature>
<feature type="turn" evidence="2">
    <location>
        <begin position="308"/>
        <end position="313"/>
    </location>
</feature>
<feature type="helix" evidence="2">
    <location>
        <begin position="314"/>
        <end position="325"/>
    </location>
</feature>
<feature type="turn" evidence="2">
    <location>
        <begin position="329"/>
        <end position="333"/>
    </location>
</feature>
<dbReference type="EC" id="1.2.1.38" evidence="1"/>
<dbReference type="EMBL" id="AE005674">
    <property type="protein sequence ID" value="AAN45465.1"/>
    <property type="molecule type" value="Genomic_DNA"/>
</dbReference>
<dbReference type="EMBL" id="AE014073">
    <property type="protein sequence ID" value="AAP18737.1"/>
    <property type="molecule type" value="Genomic_DNA"/>
</dbReference>
<dbReference type="RefSeq" id="NP_709758.1">
    <property type="nucleotide sequence ID" value="NC_004337.2"/>
</dbReference>
<dbReference type="RefSeq" id="WP_000935388.1">
    <property type="nucleotide sequence ID" value="NZ_WPGW01000012.1"/>
</dbReference>
<dbReference type="PDB" id="3DR3">
    <property type="method" value="X-ray"/>
    <property type="resolution" value="2.00 A"/>
    <property type="chains" value="A=1-334"/>
</dbReference>
<dbReference type="PDBsum" id="3DR3"/>
<dbReference type="SMR" id="P59310"/>
<dbReference type="STRING" id="198214.SF4035"/>
<dbReference type="PaxDb" id="198214-SF4035"/>
<dbReference type="GeneID" id="1026505"/>
<dbReference type="KEGG" id="sfl:SF4035"/>
<dbReference type="KEGG" id="sfx:S3711"/>
<dbReference type="PATRIC" id="fig|198214.7.peg.4757"/>
<dbReference type="HOGENOM" id="CLU_006384_0_1_6"/>
<dbReference type="UniPathway" id="UPA00068">
    <property type="reaction ID" value="UER00108"/>
</dbReference>
<dbReference type="EvolutionaryTrace" id="P59310"/>
<dbReference type="Proteomes" id="UP000001006">
    <property type="component" value="Chromosome"/>
</dbReference>
<dbReference type="Proteomes" id="UP000002673">
    <property type="component" value="Chromosome"/>
</dbReference>
<dbReference type="GO" id="GO:0005737">
    <property type="term" value="C:cytoplasm"/>
    <property type="evidence" value="ECO:0007669"/>
    <property type="project" value="UniProtKB-SubCell"/>
</dbReference>
<dbReference type="GO" id="GO:0003942">
    <property type="term" value="F:N-acetyl-gamma-glutamyl-phosphate reductase activity"/>
    <property type="evidence" value="ECO:0007669"/>
    <property type="project" value="UniProtKB-UniRule"/>
</dbReference>
<dbReference type="GO" id="GO:0051287">
    <property type="term" value="F:NAD binding"/>
    <property type="evidence" value="ECO:0007669"/>
    <property type="project" value="InterPro"/>
</dbReference>
<dbReference type="GO" id="GO:0070401">
    <property type="term" value="F:NADP+ binding"/>
    <property type="evidence" value="ECO:0007669"/>
    <property type="project" value="InterPro"/>
</dbReference>
<dbReference type="GO" id="GO:0006526">
    <property type="term" value="P:L-arginine biosynthetic process"/>
    <property type="evidence" value="ECO:0007669"/>
    <property type="project" value="UniProtKB-UniRule"/>
</dbReference>
<dbReference type="CDD" id="cd23934">
    <property type="entry name" value="AGPR_1_C"/>
    <property type="match status" value="1"/>
</dbReference>
<dbReference type="CDD" id="cd17895">
    <property type="entry name" value="AGPR_1_N"/>
    <property type="match status" value="1"/>
</dbReference>
<dbReference type="FunFam" id="3.30.360.10:FF:000014">
    <property type="entry name" value="N-acetyl-gamma-glutamyl-phosphate reductase"/>
    <property type="match status" value="1"/>
</dbReference>
<dbReference type="FunFam" id="3.40.50.720:FF:000117">
    <property type="entry name" value="N-acetyl-gamma-glutamyl-phosphate reductase"/>
    <property type="match status" value="1"/>
</dbReference>
<dbReference type="Gene3D" id="3.30.360.10">
    <property type="entry name" value="Dihydrodipicolinate Reductase, domain 2"/>
    <property type="match status" value="1"/>
</dbReference>
<dbReference type="Gene3D" id="3.40.50.720">
    <property type="entry name" value="NAD(P)-binding Rossmann-like Domain"/>
    <property type="match status" value="1"/>
</dbReference>
<dbReference type="HAMAP" id="MF_00150">
    <property type="entry name" value="ArgC_type1"/>
    <property type="match status" value="1"/>
</dbReference>
<dbReference type="InterPro" id="IPR023013">
    <property type="entry name" value="AGPR_AS"/>
</dbReference>
<dbReference type="InterPro" id="IPR000706">
    <property type="entry name" value="AGPR_type-1"/>
</dbReference>
<dbReference type="InterPro" id="IPR036291">
    <property type="entry name" value="NAD(P)-bd_dom_sf"/>
</dbReference>
<dbReference type="InterPro" id="IPR050085">
    <property type="entry name" value="NAGSA_dehydrogenase"/>
</dbReference>
<dbReference type="InterPro" id="IPR000534">
    <property type="entry name" value="Semialdehyde_DH_NAD-bd"/>
</dbReference>
<dbReference type="NCBIfam" id="TIGR01850">
    <property type="entry name" value="argC"/>
    <property type="match status" value="1"/>
</dbReference>
<dbReference type="PANTHER" id="PTHR32338:SF10">
    <property type="entry name" value="N-ACETYL-GAMMA-GLUTAMYL-PHOSPHATE REDUCTASE, CHLOROPLASTIC-RELATED"/>
    <property type="match status" value="1"/>
</dbReference>
<dbReference type="PANTHER" id="PTHR32338">
    <property type="entry name" value="N-ACETYL-GAMMA-GLUTAMYL-PHOSPHATE REDUCTASE, CHLOROPLASTIC-RELATED-RELATED"/>
    <property type="match status" value="1"/>
</dbReference>
<dbReference type="Pfam" id="PF01118">
    <property type="entry name" value="Semialdhyde_dh"/>
    <property type="match status" value="1"/>
</dbReference>
<dbReference type="Pfam" id="PF22698">
    <property type="entry name" value="Semialdhyde_dhC_1"/>
    <property type="match status" value="1"/>
</dbReference>
<dbReference type="SMART" id="SM00859">
    <property type="entry name" value="Semialdhyde_dh"/>
    <property type="match status" value="1"/>
</dbReference>
<dbReference type="SUPFAM" id="SSF55347">
    <property type="entry name" value="Glyceraldehyde-3-phosphate dehydrogenase-like, C-terminal domain"/>
    <property type="match status" value="1"/>
</dbReference>
<dbReference type="SUPFAM" id="SSF51735">
    <property type="entry name" value="NAD(P)-binding Rossmann-fold domains"/>
    <property type="match status" value="1"/>
</dbReference>
<dbReference type="PROSITE" id="PS01224">
    <property type="entry name" value="ARGC"/>
    <property type="match status" value="1"/>
</dbReference>
<name>ARGC_SHIFL</name>
<sequence length="334" mass="35938">MLNTLIVGASGYAGAELVTYVNRHPHMNITALTVSAQSNDAGKLISDLHPQLKGIVELPLQPMSDISEFSPGVDVVFLATAHEVSHDLAPQFLEAGCVVFDLSGAFRVNDATFYEKYYGFTHQYPELLEQAAYGLAEWCGNKLKEANLIAVPGCYPTAAQLALKPLIDADLLDLNQWPVINATSGVSGAGRKAAISNSFCEVSLQPYGVFTHRHQPEIATHLGADVIFTPHLGNFPRGILETITCRLKSGVTQAQVAQALQQAYAHKPLVRLYDKGVPALKNVVGLPFCDIGFAVQGEHLIIVATEDNLLKGAAAQAVQCANIRFGYAETQSLI</sequence>
<evidence type="ECO:0000255" key="1">
    <source>
        <dbReference type="HAMAP-Rule" id="MF_00150"/>
    </source>
</evidence>
<evidence type="ECO:0007829" key="2">
    <source>
        <dbReference type="PDB" id="3DR3"/>
    </source>
</evidence>
<keyword id="KW-0002">3D-structure</keyword>
<keyword id="KW-0028">Amino-acid biosynthesis</keyword>
<keyword id="KW-0055">Arginine biosynthesis</keyword>
<keyword id="KW-0963">Cytoplasm</keyword>
<keyword id="KW-0521">NADP</keyword>
<keyword id="KW-0560">Oxidoreductase</keyword>
<keyword id="KW-1185">Reference proteome</keyword>
<organism>
    <name type="scientific">Shigella flexneri</name>
    <dbReference type="NCBI Taxonomy" id="623"/>
    <lineage>
        <taxon>Bacteria</taxon>
        <taxon>Pseudomonadati</taxon>
        <taxon>Pseudomonadota</taxon>
        <taxon>Gammaproteobacteria</taxon>
        <taxon>Enterobacterales</taxon>
        <taxon>Enterobacteriaceae</taxon>
        <taxon>Shigella</taxon>
    </lineage>
</organism>